<organism>
    <name type="scientific">Eremothecium gossypii (strain ATCC 10895 / CBS 109.51 / FGSC 9923 / NRRL Y-1056)</name>
    <name type="common">Yeast</name>
    <name type="synonym">Ashbya gossypii</name>
    <dbReference type="NCBI Taxonomy" id="284811"/>
    <lineage>
        <taxon>Eukaryota</taxon>
        <taxon>Fungi</taxon>
        <taxon>Dikarya</taxon>
        <taxon>Ascomycota</taxon>
        <taxon>Saccharomycotina</taxon>
        <taxon>Saccharomycetes</taxon>
        <taxon>Saccharomycetales</taxon>
        <taxon>Saccharomycetaceae</taxon>
        <taxon>Eremothecium</taxon>
    </lineage>
</organism>
<dbReference type="EC" id="2.1.2.1"/>
<dbReference type="EMBL" id="AJ438779">
    <property type="protein sequence ID" value="CAD27656.1"/>
    <property type="molecule type" value="Genomic_DNA"/>
</dbReference>
<dbReference type="EMBL" id="AE016816">
    <property type="protein sequence ID" value="AAS51441.2"/>
    <property type="molecule type" value="Genomic_DNA"/>
</dbReference>
<dbReference type="RefSeq" id="NP_983617.2">
    <property type="nucleotide sequence ID" value="NM_208970.2"/>
</dbReference>
<dbReference type="SMR" id="Q75BQ6"/>
<dbReference type="FunCoup" id="Q75BQ6">
    <property type="interactions" value="908"/>
</dbReference>
<dbReference type="STRING" id="284811.Q75BQ6"/>
<dbReference type="EnsemblFungi" id="AAS51441">
    <property type="protein sequence ID" value="AAS51441"/>
    <property type="gene ID" value="AGOS_ACR215C"/>
</dbReference>
<dbReference type="GeneID" id="4619749"/>
<dbReference type="KEGG" id="ago:AGOS_ACR215C"/>
<dbReference type="eggNOG" id="KOG2467">
    <property type="taxonomic scope" value="Eukaryota"/>
</dbReference>
<dbReference type="HOGENOM" id="CLU_022477_0_1_1"/>
<dbReference type="InParanoid" id="Q75BQ6"/>
<dbReference type="OMA" id="CQFANVQ"/>
<dbReference type="OrthoDB" id="10265628at2759"/>
<dbReference type="BRENDA" id="2.1.2.1">
    <property type="organism ID" value="484"/>
</dbReference>
<dbReference type="UniPathway" id="UPA00193"/>
<dbReference type="Proteomes" id="UP000000591">
    <property type="component" value="Chromosome III"/>
</dbReference>
<dbReference type="GO" id="GO:0005737">
    <property type="term" value="C:cytoplasm"/>
    <property type="evidence" value="ECO:0000318"/>
    <property type="project" value="GO_Central"/>
</dbReference>
<dbReference type="GO" id="GO:0005739">
    <property type="term" value="C:mitochondrion"/>
    <property type="evidence" value="ECO:0000318"/>
    <property type="project" value="GO_Central"/>
</dbReference>
<dbReference type="GO" id="GO:0004372">
    <property type="term" value="F:glycine hydroxymethyltransferase activity"/>
    <property type="evidence" value="ECO:0000318"/>
    <property type="project" value="GO_Central"/>
</dbReference>
<dbReference type="GO" id="GO:0030170">
    <property type="term" value="F:pyridoxal phosphate binding"/>
    <property type="evidence" value="ECO:0000318"/>
    <property type="project" value="GO_Central"/>
</dbReference>
<dbReference type="GO" id="GO:0019264">
    <property type="term" value="P:glycine biosynthetic process from serine"/>
    <property type="evidence" value="ECO:0000318"/>
    <property type="project" value="GO_Central"/>
</dbReference>
<dbReference type="GO" id="GO:0035999">
    <property type="term" value="P:tetrahydrofolate interconversion"/>
    <property type="evidence" value="ECO:0007669"/>
    <property type="project" value="UniProtKB-UniPathway"/>
</dbReference>
<dbReference type="GO" id="GO:0046653">
    <property type="term" value="P:tetrahydrofolate metabolic process"/>
    <property type="evidence" value="ECO:0000318"/>
    <property type="project" value="GO_Central"/>
</dbReference>
<dbReference type="CDD" id="cd00378">
    <property type="entry name" value="SHMT"/>
    <property type="match status" value="1"/>
</dbReference>
<dbReference type="FunFam" id="3.40.640.10:FF:000097">
    <property type="entry name" value="Serine hydroxymethyltransferase"/>
    <property type="match status" value="1"/>
</dbReference>
<dbReference type="Gene3D" id="3.90.1150.10">
    <property type="entry name" value="Aspartate Aminotransferase, domain 1"/>
    <property type="match status" value="1"/>
</dbReference>
<dbReference type="Gene3D" id="3.40.640.10">
    <property type="entry name" value="Type I PLP-dependent aspartate aminotransferase-like (Major domain)"/>
    <property type="match status" value="1"/>
</dbReference>
<dbReference type="HAMAP" id="MF_00051">
    <property type="entry name" value="SHMT"/>
    <property type="match status" value="1"/>
</dbReference>
<dbReference type="InterPro" id="IPR015424">
    <property type="entry name" value="PyrdxlP-dep_Trfase"/>
</dbReference>
<dbReference type="InterPro" id="IPR015421">
    <property type="entry name" value="PyrdxlP-dep_Trfase_major"/>
</dbReference>
<dbReference type="InterPro" id="IPR015422">
    <property type="entry name" value="PyrdxlP-dep_Trfase_small"/>
</dbReference>
<dbReference type="InterPro" id="IPR001085">
    <property type="entry name" value="Ser_HO-MeTrfase"/>
</dbReference>
<dbReference type="InterPro" id="IPR049943">
    <property type="entry name" value="Ser_HO-MeTrfase-like"/>
</dbReference>
<dbReference type="InterPro" id="IPR019798">
    <property type="entry name" value="Ser_HO-MeTrfase_PLP_BS"/>
</dbReference>
<dbReference type="InterPro" id="IPR039429">
    <property type="entry name" value="SHMT-like_dom"/>
</dbReference>
<dbReference type="NCBIfam" id="NF000586">
    <property type="entry name" value="PRK00011.1"/>
    <property type="match status" value="1"/>
</dbReference>
<dbReference type="PANTHER" id="PTHR11680">
    <property type="entry name" value="SERINE HYDROXYMETHYLTRANSFERASE"/>
    <property type="match status" value="1"/>
</dbReference>
<dbReference type="PANTHER" id="PTHR11680:SF28">
    <property type="entry name" value="SERINE HYDROXYMETHYLTRANSFERASE, MITOCHONDRIAL"/>
    <property type="match status" value="1"/>
</dbReference>
<dbReference type="Pfam" id="PF00464">
    <property type="entry name" value="SHMT"/>
    <property type="match status" value="1"/>
</dbReference>
<dbReference type="PIRSF" id="PIRSF000412">
    <property type="entry name" value="SHMT"/>
    <property type="match status" value="1"/>
</dbReference>
<dbReference type="SUPFAM" id="SSF53383">
    <property type="entry name" value="PLP-dependent transferases"/>
    <property type="match status" value="1"/>
</dbReference>
<dbReference type="PROSITE" id="PS00096">
    <property type="entry name" value="SHMT"/>
    <property type="match status" value="1"/>
</dbReference>
<protein>
    <recommendedName>
        <fullName>Serine hydroxymethyltransferase, cytosolic</fullName>
        <shortName>SHMT</shortName>
        <ecNumber>2.1.2.1</ecNumber>
    </recommendedName>
    <alternativeName>
        <fullName>Glycine hydroxymethyltransferase</fullName>
    </alternativeName>
    <alternativeName>
        <fullName>Serine methylase</fullName>
    </alternativeName>
</protein>
<comment type="function">
    <text evidence="2">Interconversion of serine and glycine.</text>
</comment>
<comment type="catalytic activity">
    <reaction>
        <text>(6R)-5,10-methylene-5,6,7,8-tetrahydrofolate + glycine + H2O = (6S)-5,6,7,8-tetrahydrofolate + L-serine</text>
        <dbReference type="Rhea" id="RHEA:15481"/>
        <dbReference type="ChEBI" id="CHEBI:15377"/>
        <dbReference type="ChEBI" id="CHEBI:15636"/>
        <dbReference type="ChEBI" id="CHEBI:33384"/>
        <dbReference type="ChEBI" id="CHEBI:57305"/>
        <dbReference type="ChEBI" id="CHEBI:57453"/>
        <dbReference type="EC" id="2.1.2.1"/>
    </reaction>
</comment>
<comment type="cofactor">
    <cofactor evidence="1">
        <name>pyridoxal 5'-phosphate</name>
        <dbReference type="ChEBI" id="CHEBI:597326"/>
    </cofactor>
</comment>
<comment type="pathway">
    <text>One-carbon metabolism; tetrahydrofolate interconversion.</text>
</comment>
<comment type="subunit">
    <text evidence="1">Homotetramer.</text>
</comment>
<comment type="subcellular location">
    <subcellularLocation>
        <location>Cytoplasm</location>
    </subcellularLocation>
</comment>
<comment type="similarity">
    <text evidence="3">Belongs to the SHMT family.</text>
</comment>
<sequence length="469" mass="52243">MPYHLSESHKKLISSHLSESDPEVDAIIKDEIDRQKHSIVLIASENLTSTAVFDALGTPMCNKYSEGYPGARYYGGNQHIDRMELLCQRRALEAFHVTPDRWGVNVQSLSGSPANLQVYQALMKPHERLMGLHLPDGGHLSHGYQTETRKISAVSTYFESFPYRVDPETGIIDYDTLEKNAVLYRPKILVAGTSAYCRLIDYKRMREIADKVGAYLMVDMAHISGLVAAGVIPSPFEYADIVTTTTHKSLRGPRGAMIFFRRGVRSVHPKTGEEVMYDLEGPINFSVFPGHQGGPHNHTISALATALKQATTPEFREYQELVLKNAKVLETEFKKLNYRLVSDGTDSHMVLVSLREKGVDGARVEHVCEKINIALNKNSIPGDKSALVPGGVRIGAPAMTTRGMGEEDFARIVGYINRAVEIARSIQQSLPKEANRLKDFKAKVEDGTDEIAQLAQEIYSWTEEYPLPV</sequence>
<accession>Q75BQ6</accession>
<accession>Q5K599</accession>
<proteinExistence type="inferred from homology"/>
<keyword id="KW-0963">Cytoplasm</keyword>
<keyword id="KW-0554">One-carbon metabolism</keyword>
<keyword id="KW-0663">Pyridoxal phosphate</keyword>
<keyword id="KW-1185">Reference proteome</keyword>
<keyword id="KW-0808">Transferase</keyword>
<feature type="chain" id="PRO_0000113510" description="Serine hydroxymethyltransferase, cytosolic">
    <location>
        <begin position="1"/>
        <end position="469"/>
    </location>
</feature>
<feature type="modified residue" description="N6-(pyridoxal phosphate)lysine" evidence="1">
    <location>
        <position position="248"/>
    </location>
</feature>
<reference key="1">
    <citation type="journal article" date="2003" name="Biochem. J.">
        <title>Disruption of the SHM2 gene, encoding one of two serine hydroxymethyltransferase isoenzymes, reduces the flux from glycine to serine in Ashbya gossypii.</title>
        <authorList>
            <person name="Schluepen C."/>
            <person name="Santos M.A."/>
            <person name="Weber U."/>
            <person name="de Graaf A."/>
            <person name="Revuelta J.L."/>
            <person name="Stahmann K.-P."/>
        </authorList>
    </citation>
    <scope>NUCLEOTIDE SEQUENCE [GENOMIC DNA]</scope>
    <scope>FUNCTION</scope>
</reference>
<reference key="2">
    <citation type="journal article" date="2004" name="Science">
        <title>The Ashbya gossypii genome as a tool for mapping the ancient Saccharomyces cerevisiae genome.</title>
        <authorList>
            <person name="Dietrich F.S."/>
            <person name="Voegeli S."/>
            <person name="Brachat S."/>
            <person name="Lerch A."/>
            <person name="Gates K."/>
            <person name="Steiner S."/>
            <person name="Mohr C."/>
            <person name="Poehlmann R."/>
            <person name="Luedi P."/>
            <person name="Choi S."/>
            <person name="Wing R.A."/>
            <person name="Flavier A."/>
            <person name="Gaffney T.D."/>
            <person name="Philippsen P."/>
        </authorList>
    </citation>
    <scope>NUCLEOTIDE SEQUENCE [LARGE SCALE GENOMIC DNA]</scope>
    <source>
        <strain>ATCC 10895 / CBS 109.51 / FGSC 9923 / NRRL Y-1056</strain>
    </source>
</reference>
<reference key="3">
    <citation type="journal article" date="2013" name="G3 (Bethesda)">
        <title>Genomes of Ashbya fungi isolated from insects reveal four mating-type loci, numerous translocations, lack of transposons, and distinct gene duplications.</title>
        <authorList>
            <person name="Dietrich F.S."/>
            <person name="Voegeli S."/>
            <person name="Kuo S."/>
            <person name="Philippsen P."/>
        </authorList>
    </citation>
    <scope>GENOME REANNOTATION</scope>
    <scope>SEQUENCE REVISION TO 446</scope>
    <source>
        <strain>ATCC 10895 / CBS 109.51 / FGSC 9923 / NRRL Y-1056</strain>
    </source>
</reference>
<evidence type="ECO:0000250" key="1"/>
<evidence type="ECO:0000269" key="2">
    <source>
    </source>
</evidence>
<evidence type="ECO:0000305" key="3"/>
<name>GLYC_EREGS</name>
<gene>
    <name type="primary">SHM2</name>
    <name type="ordered locus">ACR215C</name>
</gene>